<name>DMP_BPT5</name>
<dbReference type="EC" id="3.1.3.89" evidence="2"/>
<dbReference type="EMBL" id="AY543070">
    <property type="protein sequence ID" value="AAS77048.1"/>
    <property type="molecule type" value="Genomic_DNA"/>
</dbReference>
<dbReference type="EMBL" id="AY692264">
    <property type="protein sequence ID" value="AAU05154.1"/>
    <property type="molecule type" value="Genomic_DNA"/>
</dbReference>
<dbReference type="EMBL" id="AY692264">
    <property type="protein sequence ID" value="AAU05298.1"/>
    <property type="molecule type" value="Genomic_DNA"/>
</dbReference>
<dbReference type="EMBL" id="AY587007">
    <property type="protein sequence ID" value="AAX11938.1"/>
    <property type="molecule type" value="Genomic_DNA"/>
</dbReference>
<dbReference type="EMBL" id="AY587007">
    <property type="protein sequence ID" value="AAX12089.1"/>
    <property type="molecule type" value="Genomic_DNA"/>
</dbReference>
<dbReference type="EMBL" id="X75922">
    <property type="protein sequence ID" value="CAA53525.1"/>
    <property type="molecule type" value="Genomic_DNA"/>
</dbReference>
<dbReference type="PIR" id="S44989">
    <property type="entry name" value="S44989"/>
</dbReference>
<dbReference type="RefSeq" id="YP_006829.1">
    <property type="nucleotide sequence ID" value="NC_005859.1"/>
</dbReference>
<dbReference type="GeneID" id="2777573"/>
<dbReference type="KEGG" id="vg:2777573"/>
<dbReference type="Proteomes" id="UP000002107">
    <property type="component" value="Genome"/>
</dbReference>
<dbReference type="Proteomes" id="UP000002141">
    <property type="component" value="Segment"/>
</dbReference>
<dbReference type="Proteomes" id="UP000002503">
    <property type="component" value="Segment"/>
</dbReference>
<dbReference type="GO" id="GO:0002953">
    <property type="term" value="F:5'-deoxynucleotidase activity"/>
    <property type="evidence" value="ECO:0007669"/>
    <property type="project" value="UniProtKB-EC"/>
</dbReference>
<dbReference type="FunFam" id="3.40.50.1000:FF:000318">
    <property type="entry name" value="5'-deoxynucleotidase"/>
    <property type="match status" value="1"/>
</dbReference>
<dbReference type="Gene3D" id="3.40.50.1000">
    <property type="entry name" value="HAD superfamily/HAD-like"/>
    <property type="match status" value="1"/>
</dbReference>
<dbReference type="InterPro" id="IPR023214">
    <property type="entry name" value="HAD_sf"/>
</dbReference>
<gene>
    <name type="primary">dmp</name>
    <name evidence="6" type="ORF">T5.001</name>
    <name evidence="7" type="ORF">T5p001</name>
</gene>
<gene>
    <name evidence="8" type="primary">T5p159</name>
</gene>
<accession>Q38167</accession>
<accession>Q66LQ4</accession>
<accession>Q6QGT6</accession>
<comment type="function">
    <text evidence="2 3">Following host DNA degradation, is responsible for the degradation of 5'-dNMP's to deoxynucleosides that can be further excreted (PubMed:335083). Active on deoxynucleoside 5'-monophosphates but not active as a phosphatase on ribonucleotides, deoxynucleoside 5'-triphosphates, deoxynucleoside 3'-monophosphates, or deoxyoligonucleotides (PubMed:21305).</text>
</comment>
<comment type="catalytic activity">
    <reaction>
        <text>a 2'-deoxyribonucleoside 5'-phosphate + H2O = a 2'-deoxyribonucleoside + phosphate</text>
        <dbReference type="Rhea" id="RHEA:36167"/>
        <dbReference type="ChEBI" id="CHEBI:15377"/>
        <dbReference type="ChEBI" id="CHEBI:18274"/>
        <dbReference type="ChEBI" id="CHEBI:43474"/>
        <dbReference type="ChEBI" id="CHEBI:65317"/>
        <dbReference type="EC" id="3.1.3.89"/>
    </reaction>
</comment>
<comment type="induction">
    <text evidence="4">Expressed pre-early in the viral replicative cycle. Expressed with a few other proteins from the first step transfer (FST) DNA. FST DNA corresponds to the first small portion of the genome that enters into the host cell at the beginning of infection before pausing.</text>
</comment>
<comment type="miscellaneous">
    <text evidence="1">This gene is part of the long terminal repeats present at both ends of the viral genome and is thus duplicated.</text>
</comment>
<organismHost>
    <name type="scientific">Escherichia coli</name>
    <dbReference type="NCBI Taxonomy" id="562"/>
</organismHost>
<sequence>MNQVKTNITRNFPHISRVMIWDLDGTIINSFHRVAPCFDSEGNLDLNKYKNEACKHDLIMQDTLLPLVTYMRQCMNDANTLNIICTARLMSKSDYYYLRKQGLRGRGDSNIRVFSRDTLHKYFEADKVSEIYHSKDAVYKSYYFGLFKQLYPNADFTMIDDHKGVLSAAASYGFKTLDAQAVNDILSIGVTLIGETFIDESLEDDNDYQFLADRLQLCWEGMTEEERAEYSCSPQQYIEKLKVA</sequence>
<protein>
    <recommendedName>
        <fullName>5'-deoxynucleotidase</fullName>
        <ecNumber evidence="2">3.1.3.89</ecNumber>
    </recommendedName>
    <alternativeName>
        <fullName>Deoxynucleoside-5'-monophosphatase</fullName>
        <shortName>5'-dNMPase</shortName>
    </alternativeName>
    <alternativeName>
        <fullName>Protein dmp</fullName>
    </alternativeName>
</protein>
<feature type="chain" id="PRO_0000165218" description="5'-deoxynucleotidase">
    <location>
        <begin position="1"/>
        <end position="244"/>
    </location>
</feature>
<feature type="sequence conflict" description="In Ref. 3; AAU05298." evidence="5" ref="3">
    <original>E</original>
    <variation>K</variation>
    <location>
        <position position="225"/>
    </location>
</feature>
<keyword id="KW-0244">Early protein</keyword>
<keyword id="KW-0378">Hydrolase</keyword>
<keyword id="KW-1185">Reference proteome</keyword>
<reference key="1">
    <citation type="submission" date="2004-01" db="EMBL/GenBank/DDBJ databases">
        <title>Bacteriophage T5 complete genome.</title>
        <authorList>
            <person name="Ksenzenko V.N."/>
            <person name="Kaliman A.V."/>
            <person name="Krutilina A.I."/>
            <person name="Shlyapnikov M.G."/>
        </authorList>
    </citation>
    <scope>NUCLEOTIDE SEQUENCE [LARGE SCALE GENOMIC DNA]</scope>
</reference>
<reference key="2">
    <citation type="journal article" date="2005" name="Virology">
        <title>Complete genome sequence of bacteriophage T5.</title>
        <authorList>
            <person name="Wang J."/>
            <person name="Jiang Y."/>
            <person name="Vincent M."/>
            <person name="Sun Y."/>
            <person name="Yu H."/>
            <person name="Wang J."/>
            <person name="Bao Q."/>
            <person name="Kong H."/>
            <person name="Hu S."/>
        </authorList>
    </citation>
    <scope>NUCLEOTIDE SEQUENCE [LARGE SCALE GENOMIC DNA]</scope>
    <source>
        <strain>ATCC 11303-B5</strain>
    </source>
</reference>
<reference key="3">
    <citation type="journal article" date="2014" name="J. Virol.">
        <title>Insights into bacteriophage T5 structure from analysis of its morphogenesis genes and protein components.</title>
        <authorList>
            <person name="Zivanovic Y."/>
            <person name="Confalonieri F."/>
            <person name="Ponchon L."/>
            <person name="Lurz R."/>
            <person name="Chami M."/>
            <person name="Flayhan A."/>
            <person name="Renouard M."/>
            <person name="Huet A."/>
            <person name="Decottignies P."/>
            <person name="Davidson A.R."/>
            <person name="Breyton C."/>
            <person name="Boulanger P."/>
        </authorList>
    </citation>
    <scope>NUCLEOTIDE SEQUENCE [LARGE SCALE GENOMIC DNA]</scope>
    <source>
        <strain>St0 deletion mutant</strain>
    </source>
</reference>
<reference key="4">
    <citation type="journal article" date="1994" name="Mol. Microbiol.">
        <title>Lytic conversion of Escherichia coli by bacteriophage T5: blocking of the FhuA receptor protein by a lipoprotein expressed early during infection.</title>
        <authorList>
            <person name="Decker K."/>
            <person name="Krauel V."/>
            <person name="Meesmann A."/>
            <person name="Heller K.J."/>
        </authorList>
    </citation>
    <scope>NUCLEOTIDE SEQUENCE [GENOMIC DNA] OF 161-244</scope>
</reference>
<reference key="5">
    <citation type="journal article" date="1977" name="J. Virol.">
        <title>Properties of deoxynucleoside 5'-monophosphatase induced by bacteriophage T5 after infection of Escherichia coli.</title>
        <authorList>
            <person name="Mozer T.J."/>
            <person name="Warner H.R."/>
        </authorList>
    </citation>
    <scope>CHARACTERIZATION</scope>
    <scope>CATALYTIC ACTIVITY</scope>
    <scope>FUNCTION</scope>
</reference>
<reference key="6">
    <citation type="journal article" date="1977" name="J. Virol.">
        <title>Isolation and characterization of a bacteriophage T5 mutant deficient in deoxynucleoside 5'-monophosphatase activity.</title>
        <authorList>
            <person name="Mozer T.J."/>
            <person name="Thompson R.B."/>
            <person name="Berget S.M."/>
            <person name="Warner H.R."/>
        </authorList>
    </citation>
    <scope>FUNCTION</scope>
    <scope>INDUCTION</scope>
</reference>
<evidence type="ECO:0000269" key="1">
    <source>
    </source>
</evidence>
<evidence type="ECO:0000269" key="2">
    <source>
    </source>
</evidence>
<evidence type="ECO:0000269" key="3">
    <source>
    </source>
</evidence>
<evidence type="ECO:0000303" key="4">
    <source>
    </source>
</evidence>
<evidence type="ECO:0000305" key="5"/>
<evidence type="ECO:0000312" key="6">
    <source>
        <dbReference type="EMBL" id="AAS77048.1"/>
    </source>
</evidence>
<evidence type="ECO:0000312" key="7">
    <source>
        <dbReference type="EMBL" id="AAU05154.1"/>
    </source>
</evidence>
<evidence type="ECO:0000312" key="8">
    <source>
        <dbReference type="EMBL" id="AAU05298.1"/>
    </source>
</evidence>
<organism>
    <name type="scientific">Escherichia phage T5</name>
    <name type="common">Enterobacteria phage T5</name>
    <dbReference type="NCBI Taxonomy" id="2695836"/>
    <lineage>
        <taxon>Viruses</taxon>
        <taxon>Duplodnaviria</taxon>
        <taxon>Heunggongvirae</taxon>
        <taxon>Uroviricota</taxon>
        <taxon>Caudoviricetes</taxon>
        <taxon>Demerecviridae</taxon>
        <taxon>Markadamsvirinae</taxon>
        <taxon>Tequintavirus</taxon>
        <taxon>Tequintavirus T5</taxon>
    </lineage>
</organism>
<proteinExistence type="evidence at protein level"/>